<comment type="PTM">
    <text>Exported by the Tat system. The position of the signal peptide cleavage has not been experimentally proven. Can also be exported by the Sec system.</text>
</comment>
<comment type="similarity">
    <text evidence="2">Belongs to the metallo-dependent hydrolases superfamily.</text>
</comment>
<reference key="1">
    <citation type="submission" date="1997-01" db="EMBL/GenBank/DDBJ databases">
        <title>Sequence of minutes 4-25 of Escherichia coli.</title>
        <authorList>
            <person name="Chung E."/>
            <person name="Allen E."/>
            <person name="Araujo R."/>
            <person name="Aparicio A.M."/>
            <person name="Davis K."/>
            <person name="Duncan M."/>
            <person name="Federspiel N."/>
            <person name="Hyman R."/>
            <person name="Kalman S."/>
            <person name="Komp C."/>
            <person name="Kurdi O."/>
            <person name="Lew H."/>
            <person name="Lin D."/>
            <person name="Namath A."/>
            <person name="Oefner P."/>
            <person name="Roberts D."/>
            <person name="Schramm S."/>
            <person name="Davis R.W."/>
        </authorList>
    </citation>
    <scope>NUCLEOTIDE SEQUENCE [LARGE SCALE GENOMIC DNA]</scope>
    <source>
        <strain>K12 / MG1655 / ATCC 47076</strain>
    </source>
</reference>
<reference key="2">
    <citation type="journal article" date="1997" name="Science">
        <title>The complete genome sequence of Escherichia coli K-12.</title>
        <authorList>
            <person name="Blattner F.R."/>
            <person name="Plunkett G. III"/>
            <person name="Bloch C.A."/>
            <person name="Perna N.T."/>
            <person name="Burland V."/>
            <person name="Riley M."/>
            <person name="Collado-Vides J."/>
            <person name="Glasner J.D."/>
            <person name="Rode C.K."/>
            <person name="Mayhew G.F."/>
            <person name="Gregor J."/>
            <person name="Davis N.W."/>
            <person name="Kirkpatrick H.A."/>
            <person name="Goeden M.A."/>
            <person name="Rose D.J."/>
            <person name="Mau B."/>
            <person name="Shao Y."/>
        </authorList>
    </citation>
    <scope>NUCLEOTIDE SEQUENCE [LARGE SCALE GENOMIC DNA]</scope>
    <source>
        <strain>K12 / MG1655 / ATCC 47076</strain>
    </source>
</reference>
<reference key="3">
    <citation type="journal article" date="2006" name="Mol. Syst. Biol.">
        <title>Highly accurate genome sequences of Escherichia coli K-12 strains MG1655 and W3110.</title>
        <authorList>
            <person name="Hayashi K."/>
            <person name="Morooka N."/>
            <person name="Yamamoto Y."/>
            <person name="Fujita K."/>
            <person name="Isono K."/>
            <person name="Choi S."/>
            <person name="Ohtsubo E."/>
            <person name="Baba T."/>
            <person name="Wanner B.L."/>
            <person name="Mori H."/>
            <person name="Horiuchi T."/>
        </authorList>
    </citation>
    <scope>NUCLEOTIDE SEQUENCE [LARGE SCALE GENOMIC DNA]</scope>
    <source>
        <strain>K12 / W3110 / ATCC 27325 / DSM 5911</strain>
    </source>
</reference>
<reference key="4">
    <citation type="journal article" date="2007" name="J. Biol. Chem.">
        <title>Export pathway selectivity of Escherichia coli twin arginine translocation signal peptides.</title>
        <authorList>
            <person name="Tullman-Ercek D."/>
            <person name="DeLisa M.P."/>
            <person name="Kawarasaki Y."/>
            <person name="Iranpour P."/>
            <person name="Ribnicky B."/>
            <person name="Palmer T."/>
            <person name="Georgiou G."/>
        </authorList>
    </citation>
    <scope>EXPORT VIA THE TAT-SYSTEM AND THE SEC-SYSTEM</scope>
</reference>
<evidence type="ECO:0000255" key="1">
    <source>
        <dbReference type="PROSITE-ProRule" id="PRU00648"/>
    </source>
</evidence>
<evidence type="ECO:0000305" key="2"/>
<dbReference type="EMBL" id="U73857">
    <property type="protein sequence ID" value="AAB18050.1"/>
    <property type="molecule type" value="Genomic_DNA"/>
</dbReference>
<dbReference type="EMBL" id="U00096">
    <property type="protein sequence ID" value="AAC73427.1"/>
    <property type="molecule type" value="Genomic_DNA"/>
</dbReference>
<dbReference type="EMBL" id="AP009048">
    <property type="protein sequence ID" value="BAE76107.1"/>
    <property type="molecule type" value="Genomic_DNA"/>
</dbReference>
<dbReference type="PIR" id="D64759">
    <property type="entry name" value="D64759"/>
</dbReference>
<dbReference type="RefSeq" id="NP_414858.1">
    <property type="nucleotide sequence ID" value="NC_000913.3"/>
</dbReference>
<dbReference type="RefSeq" id="WP_000665120.1">
    <property type="nucleotide sequence ID" value="NZ_LN832404.1"/>
</dbReference>
<dbReference type="SMR" id="P77554"/>
<dbReference type="BioGRID" id="4259801">
    <property type="interactions" value="15"/>
</dbReference>
<dbReference type="DIP" id="DIP-11262N"/>
<dbReference type="FunCoup" id="P77554">
    <property type="interactions" value="10"/>
</dbReference>
<dbReference type="IntAct" id="P77554">
    <property type="interactions" value="4"/>
</dbReference>
<dbReference type="STRING" id="511145.b0324"/>
<dbReference type="jPOST" id="P77554"/>
<dbReference type="PaxDb" id="511145-b0324"/>
<dbReference type="EnsemblBacteria" id="AAC73427">
    <property type="protein sequence ID" value="AAC73427"/>
    <property type="gene ID" value="b0324"/>
</dbReference>
<dbReference type="GeneID" id="944976"/>
<dbReference type="KEGG" id="ecj:JW0316"/>
<dbReference type="KEGG" id="eco:b0324"/>
<dbReference type="KEGG" id="ecoc:C3026_01590"/>
<dbReference type="KEGG" id="ecoc:C3026_24760"/>
<dbReference type="PATRIC" id="fig|1411691.4.peg.1953"/>
<dbReference type="EchoBASE" id="EB3363"/>
<dbReference type="eggNOG" id="COG0402">
    <property type="taxonomic scope" value="Bacteria"/>
</dbReference>
<dbReference type="HOGENOM" id="CLU_031758_4_1_6"/>
<dbReference type="InParanoid" id="P77554"/>
<dbReference type="OMA" id="GPWQAPR"/>
<dbReference type="OrthoDB" id="9815027at2"/>
<dbReference type="PhylomeDB" id="P77554"/>
<dbReference type="BioCyc" id="EcoCyc:G6189-MONOMER"/>
<dbReference type="PHI-base" id="PHI:10984"/>
<dbReference type="PRO" id="PR:P77554"/>
<dbReference type="Proteomes" id="UP000000625">
    <property type="component" value="Chromosome"/>
</dbReference>
<dbReference type="GO" id="GO:0016814">
    <property type="term" value="F:hydrolase activity, acting on carbon-nitrogen (but not peptide) bonds, in cyclic amidines"/>
    <property type="evidence" value="ECO:0000318"/>
    <property type="project" value="GO_Central"/>
</dbReference>
<dbReference type="CDD" id="cd01293">
    <property type="entry name" value="Bact_CD"/>
    <property type="match status" value="1"/>
</dbReference>
<dbReference type="Gene3D" id="3.20.20.140">
    <property type="entry name" value="Metal-dependent hydrolases"/>
    <property type="match status" value="1"/>
</dbReference>
<dbReference type="Gene3D" id="2.30.40.10">
    <property type="entry name" value="Urease, subunit C, domain 1"/>
    <property type="match status" value="1"/>
</dbReference>
<dbReference type="InterPro" id="IPR013108">
    <property type="entry name" value="Amidohydro_3"/>
</dbReference>
<dbReference type="InterPro" id="IPR011059">
    <property type="entry name" value="Metal-dep_hydrolase_composite"/>
</dbReference>
<dbReference type="InterPro" id="IPR032466">
    <property type="entry name" value="Metal_Hydrolase"/>
</dbReference>
<dbReference type="InterPro" id="IPR052349">
    <property type="entry name" value="Metallo-hydrolase_Enzymes"/>
</dbReference>
<dbReference type="InterPro" id="IPR006311">
    <property type="entry name" value="TAT_signal"/>
</dbReference>
<dbReference type="NCBIfam" id="NF005312">
    <property type="entry name" value="PRK06846.1"/>
    <property type="match status" value="1"/>
</dbReference>
<dbReference type="PANTHER" id="PTHR32027:SF9">
    <property type="entry name" value="BLL3847 PROTEIN"/>
    <property type="match status" value="1"/>
</dbReference>
<dbReference type="PANTHER" id="PTHR32027">
    <property type="entry name" value="CYTOSINE DEAMINASE"/>
    <property type="match status" value="1"/>
</dbReference>
<dbReference type="Pfam" id="PF07969">
    <property type="entry name" value="Amidohydro_3"/>
    <property type="match status" value="1"/>
</dbReference>
<dbReference type="SUPFAM" id="SSF51338">
    <property type="entry name" value="Composite domain of metallo-dependent hydrolases"/>
    <property type="match status" value="1"/>
</dbReference>
<dbReference type="SUPFAM" id="SSF51556">
    <property type="entry name" value="Metallo-dependent hydrolases"/>
    <property type="match status" value="1"/>
</dbReference>
<dbReference type="PROSITE" id="PS51318">
    <property type="entry name" value="TAT"/>
    <property type="match status" value="1"/>
</dbReference>
<name>YAHJ_ECOLI</name>
<sequence>MKESNSRREFLSQSGKMVTAAALFGTSVPLAHAAVAGTLNCEANNTMKITDPHYYLDNVLLETGFDYENGVAVQTRTARQTVEIQDGKIVALRENKLHPDATLPHYDAGGKLMLPTTRDMHIHLDKTFYGGPWRSLNRPAGTTIQDMIKLEQKMLPELQPYTQERAEKLIDLLQSKGTTIARSHCNIEPVSGLKNLQNLQAVLARRQAGFECEIVAFPQHGLLLSKSEPLMREAMQAGAHYVGGLDPTSVDGAMEKSLDTMFQIALDYDKGVDIHLHETTPAGVAAINYMVETVEKTPQLKGKLTISHAFALATLNEQQVDELANRMVVQQISIASTVPIGTLHMPLKQLHDKGVKVMTGTDSVIDHWSPYGLGDMLEKANLYAQLYIRPNEQNLSRSLFLATGDVLPLNEKGERVWPKAQDDASFVLVDASCSAEAVARISPRTATFHKGQLVWGSVAG</sequence>
<protein>
    <recommendedName>
        <fullName>Uncharacterized protein YahJ</fullName>
    </recommendedName>
</protein>
<gene>
    <name type="primary">yahJ</name>
    <name type="ordered locus">b0324</name>
    <name type="ordered locus">JW0316</name>
</gene>
<proteinExistence type="inferred from homology"/>
<feature type="signal peptide" description="Tat-type signal" evidence="1">
    <location>
        <begin position="1"/>
        <end position="33"/>
    </location>
</feature>
<feature type="chain" id="PRO_0000168578" description="Uncharacterized protein YahJ">
    <location>
        <begin position="34"/>
        <end position="460"/>
    </location>
</feature>
<organism>
    <name type="scientific">Escherichia coli (strain K12)</name>
    <dbReference type="NCBI Taxonomy" id="83333"/>
    <lineage>
        <taxon>Bacteria</taxon>
        <taxon>Pseudomonadati</taxon>
        <taxon>Pseudomonadota</taxon>
        <taxon>Gammaproteobacteria</taxon>
        <taxon>Enterobacterales</taxon>
        <taxon>Enterobacteriaceae</taxon>
        <taxon>Escherichia</taxon>
    </lineage>
</organism>
<keyword id="KW-1185">Reference proteome</keyword>
<keyword id="KW-0732">Signal</keyword>
<accession>P77554</accession>
<accession>Q2MC99</accession>